<keyword id="KW-0044">Antibiotic</keyword>
<keyword id="KW-0929">Antimicrobial</keyword>
<keyword id="KW-0078">Bacteriocin</keyword>
<keyword id="KW-0903">Direct protein sequencing</keyword>
<keyword id="KW-0379">Hydroxylation</keyword>
<keyword id="KW-0425">Lantibiotic</keyword>
<keyword id="KW-0964">Secreted</keyword>
<keyword id="KW-0883">Thioether bond</keyword>
<reference key="1">
    <citation type="journal article" date="1990" name="J. Antibiot.">
        <title>The structure of PA48009: the revised structure of duramycin.</title>
        <authorList>
            <person name="Hayashi F."/>
            <person name="Nagashima K."/>
            <person name="Terui Y."/>
            <person name="Kawamura Y."/>
            <person name="Matsumoto K."/>
            <person name="Itazaki H."/>
        </authorList>
    </citation>
    <scope>PROTEIN SEQUENCE</scope>
    <scope>STRUCTURE BY NMR</scope>
    <source>
        <strain>PA-48009</strain>
    </source>
</reference>
<reference key="2">
    <citation type="journal article" date="1990" name="J. Antibiot.">
        <title>Duramycins B and C, two new lanthionine containing antibiotics as inhibitors of phospholipase A2. Structural revision of duramycin and cinnamycin.</title>
        <authorList>
            <person name="Fredenhagen A."/>
            <person name="Fendrich G."/>
            <person name="Marki F."/>
            <person name="Marki W."/>
            <person name="Gruner J."/>
            <person name="Raschdorf F."/>
            <person name="Peter H.H."/>
        </authorList>
    </citation>
    <scope>PROTEIN SEQUENCE</scope>
    <scope>FUNCTION</scope>
    <scope>MASS SPECTROMETRY</scope>
    <scope>CROSS-LINKS</scope>
    <scope>HYDROXYLATION AT ASP-15</scope>
    <scope>SUBCELLULAR LOCATION</scope>
</reference>
<dbReference type="GO" id="GO:0005576">
    <property type="term" value="C:extracellular region"/>
    <property type="evidence" value="ECO:0007669"/>
    <property type="project" value="UniProtKB-SubCell"/>
</dbReference>
<dbReference type="GO" id="GO:0005102">
    <property type="term" value="F:signaling receptor binding"/>
    <property type="evidence" value="ECO:0007669"/>
    <property type="project" value="UniProtKB-KW"/>
</dbReference>
<dbReference type="GO" id="GO:0042742">
    <property type="term" value="P:defense response to bacterium"/>
    <property type="evidence" value="ECO:0007669"/>
    <property type="project" value="UniProtKB-KW"/>
</dbReference>
<dbReference type="GO" id="GO:0031640">
    <property type="term" value="P:killing of cells of another organism"/>
    <property type="evidence" value="ECO:0007669"/>
    <property type="project" value="UniProtKB-KW"/>
</dbReference>
<dbReference type="InterPro" id="IPR046016">
    <property type="entry name" value="Dur/DurB-like"/>
</dbReference>
<dbReference type="Pfam" id="PF19398">
    <property type="entry name" value="DurB-like"/>
    <property type="match status" value="1"/>
</dbReference>
<evidence type="ECO:0000269" key="1">
    <source>
    </source>
</evidence>
<evidence type="ECO:0000305" key="2"/>
<evidence type="ECO:0000305" key="3">
    <source>
    </source>
</evidence>
<feature type="peptide" id="PRO_0000043970" description="Lantibiotic duramycin">
    <location>
        <begin position="1"/>
        <end position="19"/>
    </location>
</feature>
<feature type="modified residue" description="(3R)-3-hydroxyaspartate" evidence="1">
    <location>
        <position position="15"/>
    </location>
</feature>
<feature type="cross-link" description="Beta-methyllanthionine (Cys-Thr)">
    <location>
        <begin position="1"/>
        <end position="18"/>
    </location>
</feature>
<feature type="cross-link" description="Lanthionine (Ser-Cys)">
    <location>
        <begin position="4"/>
        <end position="14"/>
    </location>
</feature>
<feature type="cross-link" description="Beta-methyllanthionine (Cys-Thr)">
    <location>
        <begin position="5"/>
        <end position="11"/>
    </location>
</feature>
<feature type="cross-link" description="Lysinoalanine (Ser-Lys)">
    <location>
        <begin position="6"/>
        <end position="19"/>
    </location>
</feature>
<sequence length="19" mass="2069">CKQSCSFGPFTFVCDGNTK</sequence>
<name>DURA_STRGV</name>
<organism>
    <name type="scientific">Streptomyces griseoverticillatus</name>
    <name type="common">Streptoverticillium griseoverticillatum</name>
    <dbReference type="NCBI Taxonomy" id="68215"/>
    <lineage>
        <taxon>Bacteria</taxon>
        <taxon>Bacillati</taxon>
        <taxon>Actinomycetota</taxon>
        <taxon>Actinomycetes</taxon>
        <taxon>Kitasatosporales</taxon>
        <taxon>Streptomycetaceae</taxon>
        <taxon>Streptomyces</taxon>
        <taxon>Streptomyces cinnamoneus group</taxon>
    </lineage>
</organism>
<proteinExistence type="evidence at protein level"/>
<protein>
    <recommendedName>
        <fullName>Lantibiotic duramycin</fullName>
    </recommendedName>
    <alternativeName>
        <fullName>Antibiotic PA48009</fullName>
    </alternativeName>
    <alternativeName>
        <fullName>Leucopeptin</fullName>
    </alternativeName>
</protein>
<comment type="function">
    <text evidence="1">Is a potent inhibitor of human phospholipase A2.</text>
</comment>
<comment type="subcellular location">
    <subcellularLocation>
        <location evidence="3">Secreted</location>
    </subcellularLocation>
</comment>
<comment type="PTM">
    <text>Maturation of lantibiotics involves the enzymatic conversion of Thr, and Ser into dehydrated AA and the formation of thioether bonds with cysteine or the formation of dialkylamine bonds with lysine. This is followed by membrane translocation and cleavage of the modified precursor.</text>
</comment>
<comment type="mass spectrometry" mass="2014.0" method="FAB" evidence="1"/>
<comment type="similarity">
    <text evidence="2">Belongs to the type B lantibiotic family.</text>
</comment>
<accession>P36504</accession>